<protein>
    <recommendedName>
        <fullName evidence="1">Carboxy-S-adenosyl-L-methionine synthase</fullName>
        <shortName evidence="1">Cx-SAM synthase</shortName>
        <ecNumber evidence="1">2.1.3.-</ecNumber>
    </recommendedName>
</protein>
<comment type="function">
    <text evidence="1">Catalyzes the conversion of S-adenosyl-L-methionine (SAM) to carboxy-S-adenosyl-L-methionine (Cx-SAM).</text>
</comment>
<comment type="catalytic activity">
    <reaction evidence="1">
        <text>prephenate + S-adenosyl-L-methionine = carboxy-S-adenosyl-L-methionine + 3-phenylpyruvate + H2O</text>
        <dbReference type="Rhea" id="RHEA:51692"/>
        <dbReference type="ChEBI" id="CHEBI:15377"/>
        <dbReference type="ChEBI" id="CHEBI:18005"/>
        <dbReference type="ChEBI" id="CHEBI:29934"/>
        <dbReference type="ChEBI" id="CHEBI:59789"/>
        <dbReference type="ChEBI" id="CHEBI:134278"/>
    </reaction>
</comment>
<comment type="subunit">
    <text evidence="1">Homodimer.</text>
</comment>
<comment type="similarity">
    <text evidence="1">Belongs to the class I-like SAM-binding methyltransferase superfamily. Cx-SAM synthase family.</text>
</comment>
<feature type="chain" id="PRO_0000314385" description="Carboxy-S-adenosyl-L-methionine synthase">
    <location>
        <begin position="1"/>
        <end position="243"/>
    </location>
</feature>
<feature type="binding site" evidence="1">
    <location>
        <position position="40"/>
    </location>
    <ligand>
        <name>S-adenosyl-L-methionine</name>
        <dbReference type="ChEBI" id="CHEBI:59789"/>
    </ligand>
</feature>
<feature type="binding site" evidence="1">
    <location>
        <begin position="65"/>
        <end position="67"/>
    </location>
    <ligand>
        <name>S-adenosyl-L-methionine</name>
        <dbReference type="ChEBI" id="CHEBI:59789"/>
    </ligand>
</feature>
<feature type="binding site" evidence="1">
    <location>
        <begin position="90"/>
        <end position="91"/>
    </location>
    <ligand>
        <name>S-adenosyl-L-methionine</name>
        <dbReference type="ChEBI" id="CHEBI:59789"/>
    </ligand>
</feature>
<feature type="binding site" evidence="1">
    <location>
        <begin position="118"/>
        <end position="119"/>
    </location>
    <ligand>
        <name>S-adenosyl-L-methionine</name>
        <dbReference type="ChEBI" id="CHEBI:59789"/>
    </ligand>
</feature>
<feature type="binding site" evidence="1">
    <location>
        <position position="133"/>
    </location>
    <ligand>
        <name>S-adenosyl-L-methionine</name>
        <dbReference type="ChEBI" id="CHEBI:59789"/>
    </ligand>
</feature>
<feature type="binding site" evidence="1">
    <location>
        <position position="200"/>
    </location>
    <ligand>
        <name>S-adenosyl-L-methionine</name>
        <dbReference type="ChEBI" id="CHEBI:59789"/>
    </ligand>
</feature>
<gene>
    <name evidence="1" type="primary">cmoA</name>
    <name type="ordered locus">Shewmr7_2082</name>
</gene>
<keyword id="KW-0949">S-adenosyl-L-methionine</keyword>
<keyword id="KW-0808">Transferase</keyword>
<evidence type="ECO:0000255" key="1">
    <source>
        <dbReference type="HAMAP-Rule" id="MF_01589"/>
    </source>
</evidence>
<organism>
    <name type="scientific">Shewanella sp. (strain MR-7)</name>
    <dbReference type="NCBI Taxonomy" id="60481"/>
    <lineage>
        <taxon>Bacteria</taxon>
        <taxon>Pseudomonadati</taxon>
        <taxon>Pseudomonadota</taxon>
        <taxon>Gammaproteobacteria</taxon>
        <taxon>Alteromonadales</taxon>
        <taxon>Shewanellaceae</taxon>
        <taxon>Shewanella</taxon>
    </lineage>
</organism>
<sequence length="243" mass="27398">MNASQDTIYAQASEHISDFQFDNRVAGVFSDMIRRSVPGYTQIINTIGDFADRFVKPNTQVYDLGCSLGAATLSIRRQIQGRDCRIIAVDNSESMVTRCQENLSAYVSDTEVELICGDIRDIHIENASLVVLNFTLQFLPPEDREALIAKIYYGLNPGGLLVLSEKIRFDDAPIQSVLEELHLDFKRANGYSELEISQKRSALENVMKPDTLSIHQQRLTGQGFSHFSLWFQCFNFSSMVAIK</sequence>
<dbReference type="EC" id="2.1.3.-" evidence="1"/>
<dbReference type="EMBL" id="CP000444">
    <property type="protein sequence ID" value="ABI43070.1"/>
    <property type="molecule type" value="Genomic_DNA"/>
</dbReference>
<dbReference type="SMR" id="Q0HUY5"/>
<dbReference type="KEGG" id="shm:Shewmr7_2082"/>
<dbReference type="HOGENOM" id="CLU_078475_0_0_6"/>
<dbReference type="GO" id="GO:0016743">
    <property type="term" value="F:carboxyl- or carbamoyltransferase activity"/>
    <property type="evidence" value="ECO:0007669"/>
    <property type="project" value="UniProtKB-UniRule"/>
</dbReference>
<dbReference type="GO" id="GO:1904047">
    <property type="term" value="F:S-adenosyl-L-methionine binding"/>
    <property type="evidence" value="ECO:0007669"/>
    <property type="project" value="UniProtKB-UniRule"/>
</dbReference>
<dbReference type="GO" id="GO:0002098">
    <property type="term" value="P:tRNA wobble uridine modification"/>
    <property type="evidence" value="ECO:0007669"/>
    <property type="project" value="InterPro"/>
</dbReference>
<dbReference type="CDD" id="cd02440">
    <property type="entry name" value="AdoMet_MTases"/>
    <property type="match status" value="1"/>
</dbReference>
<dbReference type="Gene3D" id="3.40.50.150">
    <property type="entry name" value="Vaccinia Virus protein VP39"/>
    <property type="match status" value="1"/>
</dbReference>
<dbReference type="HAMAP" id="MF_01589">
    <property type="entry name" value="Cx_SAM_synthase"/>
    <property type="match status" value="1"/>
</dbReference>
<dbReference type="InterPro" id="IPR005271">
    <property type="entry name" value="CmoA"/>
</dbReference>
<dbReference type="InterPro" id="IPR041698">
    <property type="entry name" value="Methyltransf_25"/>
</dbReference>
<dbReference type="InterPro" id="IPR029063">
    <property type="entry name" value="SAM-dependent_MTases_sf"/>
</dbReference>
<dbReference type="NCBIfam" id="TIGR00740">
    <property type="entry name" value="carboxy-S-adenosyl-L-methionine synthase CmoA"/>
    <property type="match status" value="1"/>
</dbReference>
<dbReference type="NCBIfam" id="NF011995">
    <property type="entry name" value="PRK15451.1"/>
    <property type="match status" value="1"/>
</dbReference>
<dbReference type="PANTHER" id="PTHR43861:SF2">
    <property type="entry name" value="CARBOXY-S-ADENOSYL-L-METHIONINE SYNTHASE"/>
    <property type="match status" value="1"/>
</dbReference>
<dbReference type="PANTHER" id="PTHR43861">
    <property type="entry name" value="TRANS-ACONITATE 2-METHYLTRANSFERASE-RELATED"/>
    <property type="match status" value="1"/>
</dbReference>
<dbReference type="Pfam" id="PF13649">
    <property type="entry name" value="Methyltransf_25"/>
    <property type="match status" value="1"/>
</dbReference>
<dbReference type="PIRSF" id="PIRSF006325">
    <property type="entry name" value="MeTrfase_bac"/>
    <property type="match status" value="1"/>
</dbReference>
<dbReference type="SUPFAM" id="SSF53335">
    <property type="entry name" value="S-adenosyl-L-methionine-dependent methyltransferases"/>
    <property type="match status" value="1"/>
</dbReference>
<accession>Q0HUY5</accession>
<name>CMOA_SHESR</name>
<proteinExistence type="inferred from homology"/>
<reference key="1">
    <citation type="submission" date="2006-08" db="EMBL/GenBank/DDBJ databases">
        <title>Complete sequence of chromosome 1 of Shewanella sp. MR-7.</title>
        <authorList>
            <person name="Copeland A."/>
            <person name="Lucas S."/>
            <person name="Lapidus A."/>
            <person name="Barry K."/>
            <person name="Detter J.C."/>
            <person name="Glavina del Rio T."/>
            <person name="Hammon N."/>
            <person name="Israni S."/>
            <person name="Dalin E."/>
            <person name="Tice H."/>
            <person name="Pitluck S."/>
            <person name="Kiss H."/>
            <person name="Brettin T."/>
            <person name="Bruce D."/>
            <person name="Han C."/>
            <person name="Tapia R."/>
            <person name="Gilna P."/>
            <person name="Schmutz J."/>
            <person name="Larimer F."/>
            <person name="Land M."/>
            <person name="Hauser L."/>
            <person name="Kyrpides N."/>
            <person name="Mikhailova N."/>
            <person name="Nealson K."/>
            <person name="Konstantinidis K."/>
            <person name="Klappenbach J."/>
            <person name="Tiedje J."/>
            <person name="Richardson P."/>
        </authorList>
    </citation>
    <scope>NUCLEOTIDE SEQUENCE [LARGE SCALE GENOMIC DNA]</scope>
    <source>
        <strain>MR-7</strain>
    </source>
</reference>